<gene>
    <name type="primary">TFRC</name>
</gene>
<sequence length="776" mass="85659">MDHARAALSNLFSVEPMSYTRFSIARQTDGDNSHVEMKLSADDEEGGDIERPEHMHVSMAQPQRNGKRLCFLVIAAVLLLLIGFLIGYLSYRGRIELAARCQDGSGGCEITPTASYLVDGEGTVEEEIQGPPVIFWPELKAMLSKKLSAKNLVDNLRWRVGVDSFEAGEAEDTNMATYIHEEFRNFLDKVWNDEHYIKLQVRGSTKNQVSISINGKEEILETPDAIVAYSESGSVSGKPVYVNYGLKKDFEIIQKVVASLNGTIVIVRAGKITLAEKVANAKEAGAAGVLMYVDSLMYGITDTLIPFGHAHLGTGDPYTPGFPSFNHTQFPPVESSGLPHIAVQTISSSAAARLFSKMDGDTCSEGWKGAIHSCKVTTKQESQIMVKLDVNNSMKDRKILNIFGAIQGFEEPDRYVVIGAQRDSWGPGVAKAGTGTAILLELARVISDIVKNEGYKPRRSIIFASWSAGDYGAVGATEWLEGYSAMLHAKAFTYISLDAPVLGASHVKISASPLLYMLLGSIMKGVKNPAAVSESLYNRLGPDWVKAVVPLGLDNAAFPFLAYSGIPVLSFGFYNKDEEYRFLDTKGDTLENLRKIDNLDALLAAAAEVAGQAALRLTHDHELFLDIGRYSEELLAYQEEFLPYIKEVRELGLTLDWLFFARGDFQRAVTALRRDIANSDGENRVIRRALNDRMMKVEYDFLSPYLSPKDVPFRHIFFGKGPHTLRSLVEHLQLLKTNRSSVDLNLLREQLALATWTIKGAANALGGDIWETDNEF</sequence>
<proteinExistence type="evidence at transcript level"/>
<accession>Q90997</accession>
<dbReference type="EMBL" id="X55348">
    <property type="protein sequence ID" value="CAA39035.1"/>
    <property type="status" value="ALT_FRAME"/>
    <property type="molecule type" value="mRNA"/>
</dbReference>
<dbReference type="PIR" id="JH0570">
    <property type="entry name" value="JH0570"/>
</dbReference>
<dbReference type="RefSeq" id="NP_990587.2">
    <property type="nucleotide sequence ID" value="NM_205256.2"/>
</dbReference>
<dbReference type="SMR" id="Q90997"/>
<dbReference type="FunCoup" id="Q90997">
    <property type="interactions" value="1164"/>
</dbReference>
<dbReference type="STRING" id="9031.ENSGALP00000012087"/>
<dbReference type="MEROPS" id="M28.972"/>
<dbReference type="GlyCosmos" id="Q90997">
    <property type="glycosylation" value="4 sites, No reported glycans"/>
</dbReference>
<dbReference type="GlyGen" id="Q90997">
    <property type="glycosylation" value="5 sites"/>
</dbReference>
<dbReference type="PaxDb" id="9031-ENSGALP00000012087"/>
<dbReference type="GeneID" id="396191"/>
<dbReference type="KEGG" id="gga:396191"/>
<dbReference type="CTD" id="7037"/>
<dbReference type="VEuPathDB" id="HostDB:geneid_396191"/>
<dbReference type="eggNOG" id="KOG2195">
    <property type="taxonomic scope" value="Eukaryota"/>
</dbReference>
<dbReference type="InParanoid" id="Q90997"/>
<dbReference type="OrthoDB" id="5841748at2759"/>
<dbReference type="PhylomeDB" id="Q90997"/>
<dbReference type="PRO" id="PR:Q90997"/>
<dbReference type="Proteomes" id="UP000000539">
    <property type="component" value="Unassembled WGS sequence"/>
</dbReference>
<dbReference type="GO" id="GO:0009897">
    <property type="term" value="C:external side of plasma membrane"/>
    <property type="evidence" value="ECO:0000318"/>
    <property type="project" value="GO_Central"/>
</dbReference>
<dbReference type="GO" id="GO:0042470">
    <property type="term" value="C:melanosome"/>
    <property type="evidence" value="ECO:0007669"/>
    <property type="project" value="UniProtKB-SubCell"/>
</dbReference>
<dbReference type="GO" id="GO:0005886">
    <property type="term" value="C:plasma membrane"/>
    <property type="evidence" value="ECO:0000314"/>
    <property type="project" value="AgBase"/>
</dbReference>
<dbReference type="GO" id="GO:0004998">
    <property type="term" value="F:transferrin receptor activity"/>
    <property type="evidence" value="ECO:0000250"/>
    <property type="project" value="UniProtKB"/>
</dbReference>
<dbReference type="GO" id="GO:0006879">
    <property type="term" value="P:intracellular iron ion homeostasis"/>
    <property type="evidence" value="ECO:0000318"/>
    <property type="project" value="GO_Central"/>
</dbReference>
<dbReference type="GO" id="GO:0006826">
    <property type="term" value="P:iron ion transport"/>
    <property type="evidence" value="ECO:0000318"/>
    <property type="project" value="GO_Central"/>
</dbReference>
<dbReference type="GO" id="GO:0030890">
    <property type="term" value="P:positive regulation of B cell proliferation"/>
    <property type="evidence" value="ECO:0000250"/>
    <property type="project" value="UniProtKB"/>
</dbReference>
<dbReference type="GO" id="GO:0045830">
    <property type="term" value="P:positive regulation of isotype switching"/>
    <property type="evidence" value="ECO:0000250"/>
    <property type="project" value="UniProtKB"/>
</dbReference>
<dbReference type="GO" id="GO:0042102">
    <property type="term" value="P:positive regulation of T cell proliferation"/>
    <property type="evidence" value="ECO:0000250"/>
    <property type="project" value="UniProtKB"/>
</dbReference>
<dbReference type="GO" id="GO:0031623">
    <property type="term" value="P:receptor internalization"/>
    <property type="evidence" value="ECO:0000250"/>
    <property type="project" value="UniProtKB"/>
</dbReference>
<dbReference type="GO" id="GO:0033572">
    <property type="term" value="P:transferrin transport"/>
    <property type="evidence" value="ECO:0000250"/>
    <property type="project" value="UniProtKB"/>
</dbReference>
<dbReference type="CDD" id="cd09848">
    <property type="entry name" value="M28_TfR"/>
    <property type="match status" value="1"/>
</dbReference>
<dbReference type="CDD" id="cd02128">
    <property type="entry name" value="PA_TfR"/>
    <property type="match status" value="1"/>
</dbReference>
<dbReference type="FunFam" id="3.40.630.10:FF:000065">
    <property type="entry name" value="Transferrin receptor 1b"/>
    <property type="match status" value="1"/>
</dbReference>
<dbReference type="FunFam" id="1.20.930.40:FF:000002">
    <property type="entry name" value="Transferrin receptor protein 1"/>
    <property type="match status" value="1"/>
</dbReference>
<dbReference type="FunFam" id="3.50.30.30:FF:000010">
    <property type="entry name" value="Transferrin receptor protein 1"/>
    <property type="match status" value="1"/>
</dbReference>
<dbReference type="Gene3D" id="3.50.30.30">
    <property type="match status" value="1"/>
</dbReference>
<dbReference type="Gene3D" id="1.20.930.40">
    <property type="entry name" value="Transferrin receptor-like, dimerisation domain"/>
    <property type="match status" value="1"/>
</dbReference>
<dbReference type="Gene3D" id="3.40.630.10">
    <property type="entry name" value="Zn peptidases"/>
    <property type="match status" value="1"/>
</dbReference>
<dbReference type="InterPro" id="IPR046450">
    <property type="entry name" value="PA_dom_sf"/>
</dbReference>
<dbReference type="InterPro" id="IPR003137">
    <property type="entry name" value="PA_domain"/>
</dbReference>
<dbReference type="InterPro" id="IPR007484">
    <property type="entry name" value="Peptidase_M28"/>
</dbReference>
<dbReference type="InterPro" id="IPR039373">
    <property type="entry name" value="Peptidase_M28B"/>
</dbReference>
<dbReference type="InterPro" id="IPR007365">
    <property type="entry name" value="TFR-like_dimer_dom"/>
</dbReference>
<dbReference type="InterPro" id="IPR036757">
    <property type="entry name" value="TFR-like_dimer_dom_sf"/>
</dbReference>
<dbReference type="InterPro" id="IPR037324">
    <property type="entry name" value="TfR1/2_PA"/>
</dbReference>
<dbReference type="PANTHER" id="PTHR10404">
    <property type="entry name" value="N-ACETYLATED-ALPHA-LINKED ACIDIC DIPEPTIDASE"/>
    <property type="match status" value="1"/>
</dbReference>
<dbReference type="PANTHER" id="PTHR10404:SF26">
    <property type="entry name" value="TRANSFERRIN RECEPTOR PROTEIN 1"/>
    <property type="match status" value="1"/>
</dbReference>
<dbReference type="Pfam" id="PF02225">
    <property type="entry name" value="PA"/>
    <property type="match status" value="1"/>
</dbReference>
<dbReference type="Pfam" id="PF04389">
    <property type="entry name" value="Peptidase_M28"/>
    <property type="match status" value="1"/>
</dbReference>
<dbReference type="Pfam" id="PF04253">
    <property type="entry name" value="TFR_dimer"/>
    <property type="match status" value="1"/>
</dbReference>
<dbReference type="SUPFAM" id="SSF52025">
    <property type="entry name" value="PA domain"/>
    <property type="match status" value="1"/>
</dbReference>
<dbReference type="SUPFAM" id="SSF47672">
    <property type="entry name" value="Transferrin receptor-like dimerisation domain"/>
    <property type="match status" value="1"/>
</dbReference>
<dbReference type="SUPFAM" id="SSF53187">
    <property type="entry name" value="Zn-dependent exopeptidases"/>
    <property type="match status" value="1"/>
</dbReference>
<protein>
    <recommendedName>
        <fullName>Transferrin receptor protein 1</fullName>
        <shortName>TR</shortName>
        <shortName>TfR</shortName>
        <shortName>TfR1</shortName>
        <shortName>Trfr</shortName>
    </recommendedName>
</protein>
<keyword id="KW-1003">Cell membrane</keyword>
<keyword id="KW-1015">Disulfide bond</keyword>
<keyword id="KW-0254">Endocytosis</keyword>
<keyword id="KW-0325">Glycoprotein</keyword>
<keyword id="KW-0449">Lipoprotein</keyword>
<keyword id="KW-0472">Membrane</keyword>
<keyword id="KW-0564">Palmitate</keyword>
<keyword id="KW-0597">Phosphoprotein</keyword>
<keyword id="KW-0675">Receptor</keyword>
<keyword id="KW-1185">Reference proteome</keyword>
<keyword id="KW-0735">Signal-anchor</keyword>
<keyword id="KW-0812">Transmembrane</keyword>
<keyword id="KW-1133">Transmembrane helix</keyword>
<evidence type="ECO:0000250" key="1"/>
<evidence type="ECO:0000250" key="2">
    <source>
        <dbReference type="UniProtKB" id="P02786"/>
    </source>
</evidence>
<evidence type="ECO:0000250" key="3">
    <source>
        <dbReference type="UniProtKB" id="Q62351"/>
    </source>
</evidence>
<evidence type="ECO:0000255" key="4"/>
<evidence type="ECO:0000305" key="5"/>
<feature type="chain" id="PRO_0000174135" description="Transferrin receptor protein 1">
    <location>
        <begin position="1"/>
        <end position="776"/>
    </location>
</feature>
<feature type="topological domain" description="Cytoplasmic" evidence="4">
    <location>
        <begin position="1"/>
        <end position="70"/>
    </location>
</feature>
<feature type="transmembrane region" description="Helical; Signal-anchor for type II membrane protein" evidence="4">
    <location>
        <begin position="71"/>
        <end position="91"/>
    </location>
</feature>
<feature type="topological domain" description="Extracellular" evidence="4">
    <location>
        <begin position="92"/>
        <end position="776"/>
    </location>
</feature>
<feature type="domain" description="PA">
    <location>
        <begin position="230"/>
        <end position="322"/>
    </location>
</feature>
<feature type="region of interest" description="Ligand-binding" evidence="1">
    <location>
        <begin position="586"/>
        <end position="776"/>
    </location>
</feature>
<feature type="short sequence motif" description="Endocytosis signal">
    <location>
        <begin position="19"/>
        <end position="22"/>
    </location>
</feature>
<feature type="short sequence motif" description="Cell attachment site" evidence="4">
    <location>
        <begin position="662"/>
        <end position="664"/>
    </location>
</feature>
<feature type="modified residue" description="Phosphoserine" evidence="1">
    <location>
        <position position="23"/>
    </location>
</feature>
<feature type="lipid moiety-binding region" description="S-palmitoyl cysteine" evidence="1">
    <location>
        <position position="70"/>
    </location>
</feature>
<feature type="glycosylation site" description="N-linked (GlcNAc...) asparagine" evidence="2">
    <location>
        <position position="261"/>
    </location>
</feature>
<feature type="glycosylation site" description="N-linked (GlcNAc...) asparagine" evidence="2">
    <location>
        <position position="326"/>
    </location>
</feature>
<feature type="glycosylation site" description="N-linked (GlcNAc...) asparagine" evidence="4">
    <location>
        <position position="391"/>
    </location>
</feature>
<feature type="glycosylation site" description="N-linked (GlcNAc...) asparagine" evidence="4">
    <location>
        <position position="738"/>
    </location>
</feature>
<feature type="disulfide bond" description="Interchain" evidence="1">
    <location>
        <position position="101"/>
    </location>
</feature>
<feature type="sequence variant" description="In bursal lymphoma.">
    <original>R</original>
    <variation>H</variation>
    <location>
        <position position="581"/>
    </location>
</feature>
<feature type="sequence variant" description="In bursal lymphoma.">
    <original>K</original>
    <variation>Q</variation>
    <location>
        <position position="736"/>
    </location>
</feature>
<organism>
    <name type="scientific">Gallus gallus</name>
    <name type="common">Chicken</name>
    <dbReference type="NCBI Taxonomy" id="9031"/>
    <lineage>
        <taxon>Eukaryota</taxon>
        <taxon>Metazoa</taxon>
        <taxon>Chordata</taxon>
        <taxon>Craniata</taxon>
        <taxon>Vertebrata</taxon>
        <taxon>Euteleostomi</taxon>
        <taxon>Archelosauria</taxon>
        <taxon>Archosauria</taxon>
        <taxon>Dinosauria</taxon>
        <taxon>Saurischia</taxon>
        <taxon>Theropoda</taxon>
        <taxon>Coelurosauria</taxon>
        <taxon>Aves</taxon>
        <taxon>Neognathae</taxon>
        <taxon>Galloanserae</taxon>
        <taxon>Galliformes</taxon>
        <taxon>Phasianidae</taxon>
        <taxon>Phasianinae</taxon>
        <taxon>Gallus</taxon>
    </lineage>
</organism>
<comment type="function">
    <text evidence="2 3">Cellular uptake of iron occurs via receptor-mediated endocytosis of ligand-occupied transferrin receptor into specialized endosomes (By similarity). Endosomal acidification leads to iron release. The apotransferrin-receptor complex is then recycled to the cell surface with a return to neutral pH and the concomitant loss of affinity of apotransferrin for its receptor. Transferrin receptor is necessary for development of erythrocytes and the nervous system (By similarity). Acts as a lipid sensor that regulates mitochondrial fusion by regulating activation of the JNK pathway (By similarity). When dietary levels of stearate (C18:0) are low, promotes activation of the JNK pathway, resulting in HUWE1-mediated ubiquitination and subsequent degradation of the mitofusin MFN2 and inhibition of mitochondrial fusion (By similarity). When dietary levels of stearate (C18:0) are high, TFRC stearoylation inhibits activation of the JNK pathway and thus degradation of the mitofusin MFN2 (By similarity). Mediates uptake of NICOL1 into fibroblasts where it may regulate extracellular matrix production (By similarity).</text>
</comment>
<comment type="subunit">
    <text evidence="1">Homodimer; disulfide-linked. Binds one transferrin molecule per subunit (By similarity).</text>
</comment>
<comment type="subcellular location">
    <subcellularLocation>
        <location evidence="2">Cell membrane</location>
        <topology evidence="2">Single-pass type II membrane protein</topology>
    </subcellularLocation>
    <subcellularLocation>
        <location evidence="2">Melanosome</location>
    </subcellularLocation>
</comment>
<comment type="PTM">
    <text evidence="2">Stearoylated (By similarity). Stearoylation does not affect iron uptake (By similarity).</text>
</comment>
<comment type="PTM">
    <text evidence="1">N- and O-glycosylated, phosphorylated and palmitoylated.</text>
</comment>
<comment type="similarity">
    <text evidence="5">Belongs to the peptidase M28 family. M28B subfamily.</text>
</comment>
<comment type="sequence caution" evidence="5">
    <conflict type="frameshift">
        <sequence resource="EMBL-CDS" id="CAA39035"/>
    </conflict>
    <text>The correct sequence is shown in fig.1 of PubMed:1874449.</text>
</comment>
<name>TFR1_CHICK</name>
<reference key="1">
    <citation type="journal article" date="1991" name="Gene">
        <title>The cDNA sequence and primary structure of the chicken transferrin receptor.</title>
        <authorList>
            <person name="Gerhardt E.M."/>
            <person name="Chan L.-N.L."/>
            <person name="Jing S."/>
            <person name="Qi M."/>
            <person name="Trowbridge I.S."/>
        </authorList>
    </citation>
    <scope>NUCLEOTIDE SEQUENCE [MRNA]</scope>
    <source>
        <tissue>Erythroblast</tissue>
        <tissue>Lymphoma</tissue>
    </source>
</reference>